<name>RR4_SOLBU</name>
<accession>Q2MII5</accession>
<gene>
    <name type="primary">rps4</name>
</gene>
<evidence type="ECO:0000250" key="1"/>
<evidence type="ECO:0000256" key="2">
    <source>
        <dbReference type="SAM" id="MobiDB-lite"/>
    </source>
</evidence>
<evidence type="ECO:0000305" key="3"/>
<dbReference type="EMBL" id="DQ347958">
    <property type="protein sequence ID" value="ABC56215.1"/>
    <property type="molecule type" value="Genomic_DNA"/>
</dbReference>
<dbReference type="RefSeq" id="YP_538850.1">
    <property type="nucleotide sequence ID" value="NC_007943.1"/>
</dbReference>
<dbReference type="SMR" id="Q2MII5"/>
<dbReference type="GeneID" id="3989503"/>
<dbReference type="GO" id="GO:0009507">
    <property type="term" value="C:chloroplast"/>
    <property type="evidence" value="ECO:0007669"/>
    <property type="project" value="UniProtKB-SubCell"/>
</dbReference>
<dbReference type="GO" id="GO:0015935">
    <property type="term" value="C:small ribosomal subunit"/>
    <property type="evidence" value="ECO:0007669"/>
    <property type="project" value="InterPro"/>
</dbReference>
<dbReference type="GO" id="GO:0019843">
    <property type="term" value="F:rRNA binding"/>
    <property type="evidence" value="ECO:0007669"/>
    <property type="project" value="UniProtKB-UniRule"/>
</dbReference>
<dbReference type="GO" id="GO:0003735">
    <property type="term" value="F:structural constituent of ribosome"/>
    <property type="evidence" value="ECO:0007669"/>
    <property type="project" value="InterPro"/>
</dbReference>
<dbReference type="GO" id="GO:0042274">
    <property type="term" value="P:ribosomal small subunit biogenesis"/>
    <property type="evidence" value="ECO:0007669"/>
    <property type="project" value="TreeGrafter"/>
</dbReference>
<dbReference type="GO" id="GO:0006412">
    <property type="term" value="P:translation"/>
    <property type="evidence" value="ECO:0007669"/>
    <property type="project" value="UniProtKB-UniRule"/>
</dbReference>
<dbReference type="CDD" id="cd00165">
    <property type="entry name" value="S4"/>
    <property type="match status" value="1"/>
</dbReference>
<dbReference type="FunFam" id="1.10.1050.10:FF:000002">
    <property type="entry name" value="30S ribosomal protein S4, chloroplastic"/>
    <property type="match status" value="1"/>
</dbReference>
<dbReference type="FunFam" id="3.10.290.10:FF:000081">
    <property type="entry name" value="30S ribosomal protein S4, chloroplastic"/>
    <property type="match status" value="1"/>
</dbReference>
<dbReference type="Gene3D" id="1.10.1050.10">
    <property type="entry name" value="Ribosomal Protein S4 Delta 41, Chain A, domain 1"/>
    <property type="match status" value="1"/>
</dbReference>
<dbReference type="Gene3D" id="3.10.290.10">
    <property type="entry name" value="RNA-binding S4 domain"/>
    <property type="match status" value="1"/>
</dbReference>
<dbReference type="HAMAP" id="MF_01306_B">
    <property type="entry name" value="Ribosomal_uS4_B"/>
    <property type="match status" value="1"/>
</dbReference>
<dbReference type="InterPro" id="IPR022801">
    <property type="entry name" value="Ribosomal_uS4"/>
</dbReference>
<dbReference type="InterPro" id="IPR005709">
    <property type="entry name" value="Ribosomal_uS4_bac-type"/>
</dbReference>
<dbReference type="InterPro" id="IPR018079">
    <property type="entry name" value="Ribosomal_uS4_CS"/>
</dbReference>
<dbReference type="InterPro" id="IPR001912">
    <property type="entry name" value="Ribosomal_uS4_N"/>
</dbReference>
<dbReference type="InterPro" id="IPR002942">
    <property type="entry name" value="S4_RNA-bd"/>
</dbReference>
<dbReference type="InterPro" id="IPR036986">
    <property type="entry name" value="S4_RNA-bd_sf"/>
</dbReference>
<dbReference type="NCBIfam" id="NF003717">
    <property type="entry name" value="PRK05327.1"/>
    <property type="match status" value="1"/>
</dbReference>
<dbReference type="NCBIfam" id="TIGR01017">
    <property type="entry name" value="rpsD_bact"/>
    <property type="match status" value="1"/>
</dbReference>
<dbReference type="PANTHER" id="PTHR11831">
    <property type="entry name" value="30S 40S RIBOSOMAL PROTEIN"/>
    <property type="match status" value="1"/>
</dbReference>
<dbReference type="PANTHER" id="PTHR11831:SF4">
    <property type="entry name" value="SMALL RIBOSOMAL SUBUNIT PROTEIN US4M"/>
    <property type="match status" value="1"/>
</dbReference>
<dbReference type="Pfam" id="PF00163">
    <property type="entry name" value="Ribosomal_S4"/>
    <property type="match status" value="1"/>
</dbReference>
<dbReference type="Pfam" id="PF01479">
    <property type="entry name" value="S4"/>
    <property type="match status" value="1"/>
</dbReference>
<dbReference type="SMART" id="SM01390">
    <property type="entry name" value="Ribosomal_S4"/>
    <property type="match status" value="1"/>
</dbReference>
<dbReference type="SMART" id="SM00363">
    <property type="entry name" value="S4"/>
    <property type="match status" value="1"/>
</dbReference>
<dbReference type="SUPFAM" id="SSF55174">
    <property type="entry name" value="Alpha-L RNA-binding motif"/>
    <property type="match status" value="1"/>
</dbReference>
<dbReference type="PROSITE" id="PS00632">
    <property type="entry name" value="RIBOSOMAL_S4"/>
    <property type="match status" value="1"/>
</dbReference>
<dbReference type="PROSITE" id="PS50889">
    <property type="entry name" value="S4"/>
    <property type="match status" value="1"/>
</dbReference>
<keyword id="KW-0150">Chloroplast</keyword>
<keyword id="KW-0934">Plastid</keyword>
<keyword id="KW-0687">Ribonucleoprotein</keyword>
<keyword id="KW-0689">Ribosomal protein</keyword>
<keyword id="KW-0694">RNA-binding</keyword>
<keyword id="KW-0699">rRNA-binding</keyword>
<feature type="chain" id="PRO_0000228955" description="Small ribosomal subunit protein uS4c">
    <location>
        <begin position="1"/>
        <end position="201"/>
    </location>
</feature>
<feature type="domain" description="S4 RNA-binding">
    <location>
        <begin position="89"/>
        <end position="149"/>
    </location>
</feature>
<feature type="region of interest" description="Disordered" evidence="2">
    <location>
        <begin position="17"/>
        <end position="44"/>
    </location>
</feature>
<sequence length="201" mass="23379">MSRYRGPRFKKIRRLGALPGLTNKKPRTGSDLRNQSRSGKKSQYRIRLEEKQKLRFHYGLTERQLLKYVRIARKAKGSTGQVLLQLLEMRLDNILFRLGMASTIPAARQLVNHRHILVNGHIVDIPSYRCKPRDIITAKDEQKSRALIQISLDSSPHEELPNHLTLQPFQYKGLVNQIIDSKWVGLKINELLVVEYYSRQT</sequence>
<protein>
    <recommendedName>
        <fullName evidence="3">Small ribosomal subunit protein uS4c</fullName>
    </recommendedName>
    <alternativeName>
        <fullName>30S ribosomal protein S4, chloroplastic</fullName>
    </alternativeName>
</protein>
<reference key="1">
    <citation type="journal article" date="2006" name="Theor. Appl. Genet.">
        <title>Complete chloroplast genome sequences of Solanum bulbocastanum, Solanum lycopersicum and comparative analyses with other Solanaceae genomes.</title>
        <authorList>
            <person name="Daniell H."/>
            <person name="Lee S.-B."/>
            <person name="Grevich J."/>
            <person name="Saski C."/>
            <person name="Quesada-Vargas T."/>
            <person name="Guda C."/>
            <person name="Tomkins J."/>
            <person name="Jansen R.K."/>
        </authorList>
    </citation>
    <scope>NUCLEOTIDE SEQUENCE [LARGE SCALE GENOMIC DNA]</scope>
    <source>
        <strain>cv. PT29</strain>
    </source>
</reference>
<comment type="function">
    <text evidence="1">One of the primary rRNA binding proteins, it binds directly to 16S rRNA where it nucleates assembly of the body of the 30S subunit.</text>
</comment>
<comment type="function">
    <text evidence="1">With S5 and S12 plays an important role in translational accuracy.</text>
</comment>
<comment type="subunit">
    <text evidence="1">Part of the 30S ribosomal subunit. Contacts protein S5. The interaction surface between S4 and S5 is involved in control of translational fidelity (By similarity).</text>
</comment>
<comment type="subcellular location">
    <subcellularLocation>
        <location>Plastid</location>
        <location>Chloroplast</location>
    </subcellularLocation>
</comment>
<comment type="similarity">
    <text evidence="3">Belongs to the universal ribosomal protein uS4 family.</text>
</comment>
<proteinExistence type="inferred from homology"/>
<organism>
    <name type="scientific">Solanum bulbocastanum</name>
    <name type="common">Wild potato</name>
    <dbReference type="NCBI Taxonomy" id="147425"/>
    <lineage>
        <taxon>Eukaryota</taxon>
        <taxon>Viridiplantae</taxon>
        <taxon>Streptophyta</taxon>
        <taxon>Embryophyta</taxon>
        <taxon>Tracheophyta</taxon>
        <taxon>Spermatophyta</taxon>
        <taxon>Magnoliopsida</taxon>
        <taxon>eudicotyledons</taxon>
        <taxon>Gunneridae</taxon>
        <taxon>Pentapetalae</taxon>
        <taxon>asterids</taxon>
        <taxon>lamiids</taxon>
        <taxon>Solanales</taxon>
        <taxon>Solanaceae</taxon>
        <taxon>Solanoideae</taxon>
        <taxon>Solaneae</taxon>
        <taxon>Solanum</taxon>
    </lineage>
</organism>
<geneLocation type="chloroplast"/>